<name>PVK2_BLADU</name>
<protein>
    <recommendedName>
        <fullName>Periviscerokinin-2</fullName>
        <shortName>BlaDu-PVK-2</shortName>
        <shortName>PVK-2</shortName>
    </recommendedName>
</protein>
<feature type="peptide" id="PRO_0000044255" description="Periviscerokinin-2">
    <location>
        <begin position="1"/>
        <end position="11"/>
    </location>
</feature>
<feature type="modified residue" description="Valine amide" evidence="1 2">
    <location>
        <position position="11"/>
    </location>
</feature>
<proteinExistence type="evidence at protein level"/>
<keyword id="KW-0027">Amidation</keyword>
<keyword id="KW-0903">Direct protein sequencing</keyword>
<keyword id="KW-0527">Neuropeptide</keyword>
<keyword id="KW-0964">Secreted</keyword>
<dbReference type="GO" id="GO:0005576">
    <property type="term" value="C:extracellular region"/>
    <property type="evidence" value="ECO:0007669"/>
    <property type="project" value="UniProtKB-SubCell"/>
</dbReference>
<dbReference type="GO" id="GO:0007218">
    <property type="term" value="P:neuropeptide signaling pathway"/>
    <property type="evidence" value="ECO:0007669"/>
    <property type="project" value="UniProtKB-KW"/>
</dbReference>
<dbReference type="InterPro" id="IPR013231">
    <property type="entry name" value="Periviscerokinin"/>
</dbReference>
<dbReference type="Pfam" id="PF08259">
    <property type="entry name" value="Periviscerokin"/>
    <property type="match status" value="1"/>
</dbReference>
<reference key="1">
    <citation type="journal article" date="2000" name="Eur. J. Biochem.">
        <title>Identification of novel periviscerokinins from single neurohaemal release sites in insects. MS/MS fragmentation complemented by Edman degradation.</title>
        <authorList>
            <person name="Predel R."/>
            <person name="Kellner R."/>
            <person name="Baggerman G."/>
            <person name="Steinmetzer T."/>
            <person name="Schoofs L."/>
        </authorList>
    </citation>
    <scope>PROTEIN SEQUENCE</scope>
    <scope>FUNCTION</scope>
    <scope>MASS SPECTROMETRY</scope>
    <scope>AMIDATION AT VAL-11</scope>
    <source>
        <tissue>Abdominal perisympathetic organs</tissue>
    </source>
</reference>
<reference key="2">
    <citation type="journal article" date="2009" name="BMC Evol. Biol.">
        <title>A proteomic approach for studying insect phylogeny: CAPA peptides of ancient insect taxa (Dictyoptera, Blattoptera) as a test case.</title>
        <authorList>
            <person name="Roth S."/>
            <person name="Fromm B."/>
            <person name="Gaede G."/>
            <person name="Predel R."/>
        </authorList>
    </citation>
    <scope>PROTEIN SEQUENCE</scope>
    <scope>AMIDATION AT VAL-11</scope>
    <source>
        <tissue>Abdominal perisympathetic organs</tissue>
    </source>
</reference>
<organism>
    <name type="scientific">Blaptica dubia</name>
    <name type="common">Argentinian wood cockroach</name>
    <dbReference type="NCBI Taxonomy" id="132935"/>
    <lineage>
        <taxon>Eukaryota</taxon>
        <taxon>Metazoa</taxon>
        <taxon>Ecdysozoa</taxon>
        <taxon>Arthropoda</taxon>
        <taxon>Hexapoda</taxon>
        <taxon>Insecta</taxon>
        <taxon>Pterygota</taxon>
        <taxon>Neoptera</taxon>
        <taxon>Polyneoptera</taxon>
        <taxon>Dictyoptera</taxon>
        <taxon>Blattodea</taxon>
        <taxon>Blaberoidea</taxon>
        <taxon>Blaberidae</taxon>
        <taxon>Blaberinae</taxon>
        <taxon>Blaptica</taxon>
    </lineage>
</organism>
<sequence>GSSGLISMPRV</sequence>
<comment type="function">
    <text evidence="1">Mediates visceral muscle contractile activity (myotropic activity).</text>
</comment>
<comment type="subcellular location">
    <subcellularLocation>
        <location>Secreted</location>
    </subcellularLocation>
</comment>
<comment type="mass spectrometry"/>
<comment type="similarity">
    <text evidence="3">Belongs to the periviscerokinin family.</text>
</comment>
<evidence type="ECO:0000269" key="1">
    <source>
    </source>
</evidence>
<evidence type="ECO:0000269" key="2">
    <source>
    </source>
</evidence>
<evidence type="ECO:0000305" key="3"/>
<accession>P83929</accession>
<accession>P82699</accession>